<organism>
    <name type="scientific">Pseudoalteromonas translucida (strain TAC 125)</name>
    <dbReference type="NCBI Taxonomy" id="326442"/>
    <lineage>
        <taxon>Bacteria</taxon>
        <taxon>Pseudomonadati</taxon>
        <taxon>Pseudomonadota</taxon>
        <taxon>Gammaproteobacteria</taxon>
        <taxon>Alteromonadales</taxon>
        <taxon>Pseudoalteromonadaceae</taxon>
        <taxon>Pseudoalteromonas</taxon>
    </lineage>
</organism>
<reference key="1">
    <citation type="journal article" date="2005" name="Genome Res.">
        <title>Coping with cold: the genome of the versatile marine Antarctica bacterium Pseudoalteromonas haloplanktis TAC125.</title>
        <authorList>
            <person name="Medigue C."/>
            <person name="Krin E."/>
            <person name="Pascal G."/>
            <person name="Barbe V."/>
            <person name="Bernsel A."/>
            <person name="Bertin P.N."/>
            <person name="Cheung F."/>
            <person name="Cruveiller S."/>
            <person name="D'Amico S."/>
            <person name="Duilio A."/>
            <person name="Fang G."/>
            <person name="Feller G."/>
            <person name="Ho C."/>
            <person name="Mangenot S."/>
            <person name="Marino G."/>
            <person name="Nilsson J."/>
            <person name="Parrilli E."/>
            <person name="Rocha E.P.C."/>
            <person name="Rouy Z."/>
            <person name="Sekowska A."/>
            <person name="Tutino M.L."/>
            <person name="Vallenet D."/>
            <person name="von Heijne G."/>
            <person name="Danchin A."/>
        </authorList>
    </citation>
    <scope>NUCLEOTIDE SEQUENCE [LARGE SCALE GENOMIC DNA]</scope>
    <source>
        <strain>TAC 125</strain>
    </source>
</reference>
<evidence type="ECO:0000255" key="1">
    <source>
        <dbReference type="HAMAP-Rule" id="MF_01454"/>
    </source>
</evidence>
<evidence type="ECO:0000255" key="2">
    <source>
        <dbReference type="PROSITE-ProRule" id="PRU01231"/>
    </source>
</evidence>
<dbReference type="EC" id="3.6.5.-" evidence="1"/>
<dbReference type="EMBL" id="CR954246">
    <property type="protein sequence ID" value="CAI87702.1"/>
    <property type="molecule type" value="Genomic_DNA"/>
</dbReference>
<dbReference type="SMR" id="Q3IFF6"/>
<dbReference type="STRING" id="326442.PSHAa2654"/>
<dbReference type="KEGG" id="pha:PSHAa2654"/>
<dbReference type="PATRIC" id="fig|326442.8.peg.2564"/>
<dbReference type="eggNOG" id="COG0536">
    <property type="taxonomic scope" value="Bacteria"/>
</dbReference>
<dbReference type="HOGENOM" id="CLU_011747_2_0_6"/>
<dbReference type="BioCyc" id="PHAL326442:PSHA_RS13060-MONOMER"/>
<dbReference type="Proteomes" id="UP000006843">
    <property type="component" value="Chromosome I"/>
</dbReference>
<dbReference type="GO" id="GO:0005737">
    <property type="term" value="C:cytoplasm"/>
    <property type="evidence" value="ECO:0007669"/>
    <property type="project" value="UniProtKB-SubCell"/>
</dbReference>
<dbReference type="GO" id="GO:0005525">
    <property type="term" value="F:GTP binding"/>
    <property type="evidence" value="ECO:0007669"/>
    <property type="project" value="UniProtKB-UniRule"/>
</dbReference>
<dbReference type="GO" id="GO:0003924">
    <property type="term" value="F:GTPase activity"/>
    <property type="evidence" value="ECO:0007669"/>
    <property type="project" value="UniProtKB-UniRule"/>
</dbReference>
<dbReference type="GO" id="GO:0000287">
    <property type="term" value="F:magnesium ion binding"/>
    <property type="evidence" value="ECO:0007669"/>
    <property type="project" value="InterPro"/>
</dbReference>
<dbReference type="GO" id="GO:0042254">
    <property type="term" value="P:ribosome biogenesis"/>
    <property type="evidence" value="ECO:0007669"/>
    <property type="project" value="UniProtKB-UniRule"/>
</dbReference>
<dbReference type="CDD" id="cd01898">
    <property type="entry name" value="Obg"/>
    <property type="match status" value="1"/>
</dbReference>
<dbReference type="FunFam" id="2.70.210.12:FF:000001">
    <property type="entry name" value="GTPase Obg"/>
    <property type="match status" value="1"/>
</dbReference>
<dbReference type="Gene3D" id="2.70.210.12">
    <property type="entry name" value="GTP1/OBG domain"/>
    <property type="match status" value="1"/>
</dbReference>
<dbReference type="Gene3D" id="3.40.50.300">
    <property type="entry name" value="P-loop containing nucleotide triphosphate hydrolases"/>
    <property type="match status" value="1"/>
</dbReference>
<dbReference type="HAMAP" id="MF_01454">
    <property type="entry name" value="GTPase_Obg"/>
    <property type="match status" value="1"/>
</dbReference>
<dbReference type="InterPro" id="IPR031167">
    <property type="entry name" value="G_OBG"/>
</dbReference>
<dbReference type="InterPro" id="IPR006073">
    <property type="entry name" value="GTP-bd"/>
</dbReference>
<dbReference type="InterPro" id="IPR014100">
    <property type="entry name" value="GTP-bd_Obg/CgtA"/>
</dbReference>
<dbReference type="InterPro" id="IPR006074">
    <property type="entry name" value="GTP1-OBG_CS"/>
</dbReference>
<dbReference type="InterPro" id="IPR006169">
    <property type="entry name" value="GTP1_OBG_dom"/>
</dbReference>
<dbReference type="InterPro" id="IPR036726">
    <property type="entry name" value="GTP1_OBG_dom_sf"/>
</dbReference>
<dbReference type="InterPro" id="IPR045086">
    <property type="entry name" value="OBG_GTPase"/>
</dbReference>
<dbReference type="InterPro" id="IPR027417">
    <property type="entry name" value="P-loop_NTPase"/>
</dbReference>
<dbReference type="NCBIfam" id="TIGR02729">
    <property type="entry name" value="Obg_CgtA"/>
    <property type="match status" value="1"/>
</dbReference>
<dbReference type="NCBIfam" id="NF008955">
    <property type="entry name" value="PRK12297.1"/>
    <property type="match status" value="1"/>
</dbReference>
<dbReference type="NCBIfam" id="NF008956">
    <property type="entry name" value="PRK12299.1"/>
    <property type="match status" value="1"/>
</dbReference>
<dbReference type="PANTHER" id="PTHR11702">
    <property type="entry name" value="DEVELOPMENTALLY REGULATED GTP-BINDING PROTEIN-RELATED"/>
    <property type="match status" value="1"/>
</dbReference>
<dbReference type="PANTHER" id="PTHR11702:SF31">
    <property type="entry name" value="MITOCHONDRIAL RIBOSOME-ASSOCIATED GTPASE 2"/>
    <property type="match status" value="1"/>
</dbReference>
<dbReference type="Pfam" id="PF01018">
    <property type="entry name" value="GTP1_OBG"/>
    <property type="match status" value="1"/>
</dbReference>
<dbReference type="Pfam" id="PF01926">
    <property type="entry name" value="MMR_HSR1"/>
    <property type="match status" value="1"/>
</dbReference>
<dbReference type="PIRSF" id="PIRSF002401">
    <property type="entry name" value="GTP_bd_Obg/CgtA"/>
    <property type="match status" value="1"/>
</dbReference>
<dbReference type="PRINTS" id="PR00326">
    <property type="entry name" value="GTP1OBG"/>
</dbReference>
<dbReference type="SUPFAM" id="SSF82051">
    <property type="entry name" value="Obg GTP-binding protein N-terminal domain"/>
    <property type="match status" value="1"/>
</dbReference>
<dbReference type="SUPFAM" id="SSF52540">
    <property type="entry name" value="P-loop containing nucleoside triphosphate hydrolases"/>
    <property type="match status" value="1"/>
</dbReference>
<dbReference type="PROSITE" id="PS51710">
    <property type="entry name" value="G_OBG"/>
    <property type="match status" value="1"/>
</dbReference>
<dbReference type="PROSITE" id="PS00905">
    <property type="entry name" value="GTP1_OBG"/>
    <property type="match status" value="1"/>
</dbReference>
<dbReference type="PROSITE" id="PS51883">
    <property type="entry name" value="OBG"/>
    <property type="match status" value="1"/>
</dbReference>
<comment type="function">
    <text evidence="1">An essential GTPase which binds GTP, GDP and possibly (p)ppGpp with moderate affinity, with high nucleotide exchange rates and a fairly low GTP hydrolysis rate. Plays a role in control of the cell cycle, stress response, ribosome biogenesis and in those bacteria that undergo differentiation, in morphogenesis control.</text>
</comment>
<comment type="cofactor">
    <cofactor evidence="1">
        <name>Mg(2+)</name>
        <dbReference type="ChEBI" id="CHEBI:18420"/>
    </cofactor>
</comment>
<comment type="subunit">
    <text evidence="1">Monomer.</text>
</comment>
<comment type="subcellular location">
    <subcellularLocation>
        <location evidence="1">Cytoplasm</location>
    </subcellularLocation>
</comment>
<comment type="similarity">
    <text evidence="1">Belongs to the TRAFAC class OBG-HflX-like GTPase superfamily. OBG GTPase family.</text>
</comment>
<sequence>MKFVDEVEIRVEAGDGGAGIVSFRREKYIPEGGPDGGDGGDGGSVYLQADENLNTLIDYQFERFHRADRGTNGRSRNCTGKKSDDLIIMVPVGTRIMDVDTQEGLGDLTQHGQKILVAKGGFHGLGNARFKSSTNRAPRQKTLGTEGEVRNLKLELLLLADVGLLGLPNAGKSTFIRSVSAAKPKVADYPFTTLIPNLGVVRPEANKSFVIADIPGLIEGASDGAGLGIQFLKHLERCRILLHIIDVMPVDGSNPVDNAFAIVNELHQYSPKLAEKPRWLVFNKIDLLPADEAKALCEKIAQELGETENIYSISAINKSNTQPLIHDVMTLLESMPKEKFVETTDEEVEFKWDTYHQKAAKKSDDDDDWDEWNEDDYDVEVVYER</sequence>
<proteinExistence type="inferred from homology"/>
<feature type="chain" id="PRO_0000386149" description="GTPase Obg">
    <location>
        <begin position="1"/>
        <end position="385"/>
    </location>
</feature>
<feature type="domain" description="Obg" evidence="2">
    <location>
        <begin position="1"/>
        <end position="159"/>
    </location>
</feature>
<feature type="domain" description="OBG-type G" evidence="1">
    <location>
        <begin position="160"/>
        <end position="333"/>
    </location>
</feature>
<feature type="binding site" evidence="1">
    <location>
        <begin position="166"/>
        <end position="173"/>
    </location>
    <ligand>
        <name>GTP</name>
        <dbReference type="ChEBI" id="CHEBI:37565"/>
    </ligand>
</feature>
<feature type="binding site" evidence="1">
    <location>
        <position position="173"/>
    </location>
    <ligand>
        <name>Mg(2+)</name>
        <dbReference type="ChEBI" id="CHEBI:18420"/>
    </ligand>
</feature>
<feature type="binding site" evidence="1">
    <location>
        <begin position="191"/>
        <end position="195"/>
    </location>
    <ligand>
        <name>GTP</name>
        <dbReference type="ChEBI" id="CHEBI:37565"/>
    </ligand>
</feature>
<feature type="binding site" evidence="1">
    <location>
        <position position="193"/>
    </location>
    <ligand>
        <name>Mg(2+)</name>
        <dbReference type="ChEBI" id="CHEBI:18420"/>
    </ligand>
</feature>
<feature type="binding site" evidence="1">
    <location>
        <begin position="213"/>
        <end position="216"/>
    </location>
    <ligand>
        <name>GTP</name>
        <dbReference type="ChEBI" id="CHEBI:37565"/>
    </ligand>
</feature>
<feature type="binding site" evidence="1">
    <location>
        <begin position="283"/>
        <end position="286"/>
    </location>
    <ligand>
        <name>GTP</name>
        <dbReference type="ChEBI" id="CHEBI:37565"/>
    </ligand>
</feature>
<feature type="binding site" evidence="1">
    <location>
        <begin position="314"/>
        <end position="316"/>
    </location>
    <ligand>
        <name>GTP</name>
        <dbReference type="ChEBI" id="CHEBI:37565"/>
    </ligand>
</feature>
<protein>
    <recommendedName>
        <fullName evidence="1">GTPase Obg</fullName>
        <ecNumber evidence="1">3.6.5.-</ecNumber>
    </recommendedName>
    <alternativeName>
        <fullName evidence="1">GTP-binding protein Obg</fullName>
    </alternativeName>
</protein>
<accession>Q3IFF6</accession>
<name>OBG_PSET1</name>
<keyword id="KW-0963">Cytoplasm</keyword>
<keyword id="KW-0342">GTP-binding</keyword>
<keyword id="KW-0378">Hydrolase</keyword>
<keyword id="KW-0460">Magnesium</keyword>
<keyword id="KW-0479">Metal-binding</keyword>
<keyword id="KW-0547">Nucleotide-binding</keyword>
<keyword id="KW-1185">Reference proteome</keyword>
<gene>
    <name evidence="1" type="primary">obg</name>
    <name type="ordered locus">PSHAa2654</name>
</gene>